<reference key="1">
    <citation type="journal article" date="1999" name="Science">
        <title>Beta-secretase cleavage of Alzheimer's amyloid precursor protein by the transmembrane aspartic protease BACE.</title>
        <authorList>
            <person name="Vassar R."/>
            <person name="Bennett B.D."/>
            <person name="Babu-Khan S."/>
            <person name="Kahn S."/>
            <person name="Mendiaz E.A."/>
            <person name="Denis P."/>
            <person name="Teplow D.B."/>
            <person name="Ross S."/>
            <person name="Amarante P."/>
            <person name="Loeloff R."/>
            <person name="Luo Y."/>
            <person name="Fisher S."/>
            <person name="Fuller J."/>
            <person name="Edenson S."/>
            <person name="Lile J."/>
            <person name="Jarosinski M.A."/>
            <person name="Biere A.L."/>
            <person name="Curran E."/>
            <person name="Burgess T."/>
            <person name="Louis J.-C."/>
            <person name="Collins F."/>
            <person name="Treanor J."/>
            <person name="Rogers G."/>
            <person name="Citron M."/>
        </authorList>
    </citation>
    <scope>NUCLEOTIDE SEQUENCE [MRNA]</scope>
</reference>
<keyword id="KW-0007">Acetylation</keyword>
<keyword id="KW-0064">Aspartyl protease</keyword>
<keyword id="KW-1003">Cell membrane</keyword>
<keyword id="KW-0966">Cell projection</keyword>
<keyword id="KW-0968">Cytoplasmic vesicle</keyword>
<keyword id="KW-1015">Disulfide bond</keyword>
<keyword id="KW-0256">Endoplasmic reticulum</keyword>
<keyword id="KW-0967">Endosome</keyword>
<keyword id="KW-0325">Glycoprotein</keyword>
<keyword id="KW-0333">Golgi apparatus</keyword>
<keyword id="KW-0378">Hydrolase</keyword>
<keyword id="KW-1017">Isopeptide bond</keyword>
<keyword id="KW-0449">Lipoprotein</keyword>
<keyword id="KW-0458">Lysosome</keyword>
<keyword id="KW-0472">Membrane</keyword>
<keyword id="KW-0564">Palmitate</keyword>
<keyword id="KW-0597">Phosphoprotein</keyword>
<keyword id="KW-0645">Protease</keyword>
<keyword id="KW-1185">Reference proteome</keyword>
<keyword id="KW-0732">Signal</keyword>
<keyword id="KW-0812">Transmembrane</keyword>
<keyword id="KW-1133">Transmembrane helix</keyword>
<keyword id="KW-0832">Ubl conjugation</keyword>
<keyword id="KW-0865">Zymogen</keyword>
<proteinExistence type="evidence at transcript level"/>
<dbReference type="EC" id="3.4.23.46" evidence="2"/>
<dbReference type="EMBL" id="AF190727">
    <property type="protein sequence ID" value="AAF04144.1"/>
    <property type="molecule type" value="mRNA"/>
</dbReference>
<dbReference type="RefSeq" id="NP_062077.1">
    <property type="nucleotide sequence ID" value="NM_019204.2"/>
</dbReference>
<dbReference type="BMRB" id="P56819"/>
<dbReference type="SMR" id="P56819"/>
<dbReference type="CORUM" id="P56819"/>
<dbReference type="FunCoup" id="P56819">
    <property type="interactions" value="1462"/>
</dbReference>
<dbReference type="STRING" id="10116.ENSRNOP00000022796"/>
<dbReference type="BindingDB" id="P56819"/>
<dbReference type="ChEMBL" id="CHEMBL3259473"/>
<dbReference type="GuidetoPHARMACOLOGY" id="2330"/>
<dbReference type="MEROPS" id="A01.004"/>
<dbReference type="GlyCosmos" id="P56819">
    <property type="glycosylation" value="4 sites, No reported glycans"/>
</dbReference>
<dbReference type="GlyGen" id="P56819">
    <property type="glycosylation" value="4 sites"/>
</dbReference>
<dbReference type="PhosphoSitePlus" id="P56819"/>
<dbReference type="SwissPalm" id="P56819"/>
<dbReference type="PaxDb" id="10116-ENSRNOP00000022796"/>
<dbReference type="Ensembl" id="ENSRNOT00000022796.7">
    <property type="protein sequence ID" value="ENSRNOP00000022796.5"/>
    <property type="gene ID" value="ENSRNOG00000016847.8"/>
</dbReference>
<dbReference type="GeneID" id="29392"/>
<dbReference type="KEGG" id="rno:29392"/>
<dbReference type="UCSC" id="RGD:2191">
    <property type="organism name" value="rat"/>
</dbReference>
<dbReference type="AGR" id="RGD:2191"/>
<dbReference type="CTD" id="23621"/>
<dbReference type="RGD" id="2191">
    <property type="gene designation" value="Bace1"/>
</dbReference>
<dbReference type="eggNOG" id="KOG1339">
    <property type="taxonomic scope" value="Eukaryota"/>
</dbReference>
<dbReference type="GeneTree" id="ENSGT00940000157786"/>
<dbReference type="HOGENOM" id="CLU_039009_0_0_1"/>
<dbReference type="InParanoid" id="P56819"/>
<dbReference type="OMA" id="VLMEAFY"/>
<dbReference type="OrthoDB" id="2747330at2759"/>
<dbReference type="PhylomeDB" id="P56819"/>
<dbReference type="PRO" id="PR:P56819"/>
<dbReference type="Proteomes" id="UP000002494">
    <property type="component" value="Chromosome 8"/>
</dbReference>
<dbReference type="Bgee" id="ENSRNOG00000016847">
    <property type="expression patterns" value="Expressed in frontal cortex and 18 other cell types or tissues"/>
</dbReference>
<dbReference type="GO" id="GO:0030424">
    <property type="term" value="C:axon"/>
    <property type="evidence" value="ECO:0000314"/>
    <property type="project" value="RGD"/>
</dbReference>
<dbReference type="GO" id="GO:0009986">
    <property type="term" value="C:cell surface"/>
    <property type="evidence" value="ECO:0000250"/>
    <property type="project" value="UniProtKB"/>
</dbReference>
<dbReference type="GO" id="GO:0031410">
    <property type="term" value="C:cytoplasmic vesicle"/>
    <property type="evidence" value="ECO:0000266"/>
    <property type="project" value="RGD"/>
</dbReference>
<dbReference type="GO" id="GO:0030659">
    <property type="term" value="C:cytoplasmic vesicle membrane"/>
    <property type="evidence" value="ECO:0007669"/>
    <property type="project" value="UniProtKB-SubCell"/>
</dbReference>
<dbReference type="GO" id="GO:0030425">
    <property type="term" value="C:dendrite"/>
    <property type="evidence" value="ECO:0000314"/>
    <property type="project" value="RGD"/>
</dbReference>
<dbReference type="GO" id="GO:0005769">
    <property type="term" value="C:early endosome"/>
    <property type="evidence" value="ECO:0000250"/>
    <property type="project" value="UniProtKB"/>
</dbReference>
<dbReference type="GO" id="GO:0005783">
    <property type="term" value="C:endoplasmic reticulum"/>
    <property type="evidence" value="ECO:0007669"/>
    <property type="project" value="UniProtKB-SubCell"/>
</dbReference>
<dbReference type="GO" id="GO:0005768">
    <property type="term" value="C:endosome"/>
    <property type="evidence" value="ECO:0000314"/>
    <property type="project" value="RGD"/>
</dbReference>
<dbReference type="GO" id="GO:0005794">
    <property type="term" value="C:Golgi apparatus"/>
    <property type="evidence" value="ECO:0000250"/>
    <property type="project" value="UniProtKB"/>
</dbReference>
<dbReference type="GO" id="GO:0098686">
    <property type="term" value="C:hippocampal mossy fiber to CA3 synapse"/>
    <property type="evidence" value="ECO:0000266"/>
    <property type="project" value="RGD"/>
</dbReference>
<dbReference type="GO" id="GO:0005770">
    <property type="term" value="C:late endosome"/>
    <property type="evidence" value="ECO:0000250"/>
    <property type="project" value="UniProtKB"/>
</dbReference>
<dbReference type="GO" id="GO:0005764">
    <property type="term" value="C:lysosome"/>
    <property type="evidence" value="ECO:0000250"/>
    <property type="project" value="UniProtKB"/>
</dbReference>
<dbReference type="GO" id="GO:0016020">
    <property type="term" value="C:membrane"/>
    <property type="evidence" value="ECO:0000266"/>
    <property type="project" value="RGD"/>
</dbReference>
<dbReference type="GO" id="GO:0045121">
    <property type="term" value="C:membrane raft"/>
    <property type="evidence" value="ECO:0007669"/>
    <property type="project" value="UniProtKB-SubCell"/>
</dbReference>
<dbReference type="GO" id="GO:0005771">
    <property type="term" value="C:multivesicular body"/>
    <property type="evidence" value="ECO:0000266"/>
    <property type="project" value="RGD"/>
</dbReference>
<dbReference type="GO" id="GO:0043025">
    <property type="term" value="C:neuronal cell body"/>
    <property type="evidence" value="ECO:0000314"/>
    <property type="project" value="RGD"/>
</dbReference>
<dbReference type="GO" id="GO:0005886">
    <property type="term" value="C:plasma membrane"/>
    <property type="evidence" value="ECO:0000266"/>
    <property type="project" value="RGD"/>
</dbReference>
<dbReference type="GO" id="GO:0098793">
    <property type="term" value="C:presynapse"/>
    <property type="evidence" value="ECO:0000266"/>
    <property type="project" value="RGD"/>
</dbReference>
<dbReference type="GO" id="GO:0055037">
    <property type="term" value="C:recycling endosome"/>
    <property type="evidence" value="ECO:0000250"/>
    <property type="project" value="UniProtKB"/>
</dbReference>
<dbReference type="GO" id="GO:0008021">
    <property type="term" value="C:synaptic vesicle"/>
    <property type="evidence" value="ECO:0000314"/>
    <property type="project" value="RGD"/>
</dbReference>
<dbReference type="GO" id="GO:0005802">
    <property type="term" value="C:trans-Golgi network"/>
    <property type="evidence" value="ECO:0000250"/>
    <property type="project" value="UniProtKB"/>
</dbReference>
<dbReference type="GO" id="GO:0001540">
    <property type="term" value="F:amyloid-beta binding"/>
    <property type="evidence" value="ECO:0000266"/>
    <property type="project" value="RGD"/>
</dbReference>
<dbReference type="GO" id="GO:0004190">
    <property type="term" value="F:aspartic-type endopeptidase activity"/>
    <property type="evidence" value="ECO:0000250"/>
    <property type="project" value="UniProtKB"/>
</dbReference>
<dbReference type="GO" id="GO:0004175">
    <property type="term" value="F:endopeptidase activity"/>
    <property type="evidence" value="ECO:0000250"/>
    <property type="project" value="UniProtKB"/>
</dbReference>
<dbReference type="GO" id="GO:0019899">
    <property type="term" value="F:enzyme binding"/>
    <property type="evidence" value="ECO:0000266"/>
    <property type="project" value="RGD"/>
</dbReference>
<dbReference type="GO" id="GO:0008233">
    <property type="term" value="F:peptidase activity"/>
    <property type="evidence" value="ECO:0000314"/>
    <property type="project" value="RGD"/>
</dbReference>
<dbReference type="GO" id="GO:0120283">
    <property type="term" value="F:protein serine/threonine kinase binding"/>
    <property type="evidence" value="ECO:0000266"/>
    <property type="project" value="RGD"/>
</dbReference>
<dbReference type="GO" id="GO:0042987">
    <property type="term" value="P:amyloid precursor protein catabolic process"/>
    <property type="evidence" value="ECO:0000266"/>
    <property type="project" value="RGD"/>
</dbReference>
<dbReference type="GO" id="GO:0034205">
    <property type="term" value="P:amyloid-beta formation"/>
    <property type="evidence" value="ECO:0000266"/>
    <property type="project" value="RGD"/>
</dbReference>
<dbReference type="GO" id="GO:0050435">
    <property type="term" value="P:amyloid-beta metabolic process"/>
    <property type="evidence" value="ECO:0000315"/>
    <property type="project" value="RGD"/>
</dbReference>
<dbReference type="GO" id="GO:1904646">
    <property type="term" value="P:cellular response to amyloid-beta"/>
    <property type="evidence" value="ECO:0000270"/>
    <property type="project" value="RGD"/>
</dbReference>
<dbReference type="GO" id="GO:0071280">
    <property type="term" value="P:cellular response to copper ion"/>
    <property type="evidence" value="ECO:0000270"/>
    <property type="project" value="RGD"/>
</dbReference>
<dbReference type="GO" id="GO:0071287">
    <property type="term" value="P:cellular response to manganese ion"/>
    <property type="evidence" value="ECO:0000270"/>
    <property type="project" value="RGD"/>
</dbReference>
<dbReference type="GO" id="GO:0050966">
    <property type="term" value="P:detection of mechanical stimulus involved in sensory perception of pain"/>
    <property type="evidence" value="ECO:0000315"/>
    <property type="project" value="RGD"/>
</dbReference>
<dbReference type="GO" id="GO:0006509">
    <property type="term" value="P:membrane protein ectodomain proteolysis"/>
    <property type="evidence" value="ECO:0000266"/>
    <property type="project" value="RGD"/>
</dbReference>
<dbReference type="GO" id="GO:0050804">
    <property type="term" value="P:modulation of chemical synaptic transmission"/>
    <property type="evidence" value="ECO:0000266"/>
    <property type="project" value="RGD"/>
</dbReference>
<dbReference type="GO" id="GO:0043525">
    <property type="term" value="P:positive regulation of neuron apoptotic process"/>
    <property type="evidence" value="ECO:0000266"/>
    <property type="project" value="RGD"/>
</dbReference>
<dbReference type="GO" id="GO:0060134">
    <property type="term" value="P:prepulse inhibition"/>
    <property type="evidence" value="ECO:0000315"/>
    <property type="project" value="RGD"/>
</dbReference>
<dbReference type="GO" id="GO:0099171">
    <property type="term" value="P:presynaptic modulation of chemical synaptic transmission"/>
    <property type="evidence" value="ECO:0000266"/>
    <property type="project" value="RGD"/>
</dbReference>
<dbReference type="GO" id="GO:0016485">
    <property type="term" value="P:protein processing"/>
    <property type="evidence" value="ECO:0000266"/>
    <property type="project" value="RGD"/>
</dbReference>
<dbReference type="GO" id="GO:0006508">
    <property type="term" value="P:proteolysis"/>
    <property type="evidence" value="ECO:0000250"/>
    <property type="project" value="UniProtKB"/>
</dbReference>
<dbReference type="GO" id="GO:0010288">
    <property type="term" value="P:response to lead ion"/>
    <property type="evidence" value="ECO:0000270"/>
    <property type="project" value="RGD"/>
</dbReference>
<dbReference type="GO" id="GO:0140448">
    <property type="term" value="P:signaling receptor ligand precursor processing"/>
    <property type="evidence" value="ECO:0000266"/>
    <property type="project" value="RGD"/>
</dbReference>
<dbReference type="CDD" id="cd05473">
    <property type="entry name" value="beta_secretase_like"/>
    <property type="match status" value="1"/>
</dbReference>
<dbReference type="FunFam" id="2.40.70.10:FF:000003">
    <property type="entry name" value="Beta-secretase 1"/>
    <property type="match status" value="1"/>
</dbReference>
<dbReference type="FunFam" id="2.40.70.10:FF:000007">
    <property type="entry name" value="Beta-secretase 1"/>
    <property type="match status" value="1"/>
</dbReference>
<dbReference type="Gene3D" id="2.40.70.10">
    <property type="entry name" value="Acid Proteases"/>
    <property type="match status" value="2"/>
</dbReference>
<dbReference type="InterPro" id="IPR001461">
    <property type="entry name" value="Aspartic_peptidase_A1"/>
</dbReference>
<dbReference type="InterPro" id="IPR001969">
    <property type="entry name" value="Aspartic_peptidase_AS"/>
</dbReference>
<dbReference type="InterPro" id="IPR009119">
    <property type="entry name" value="BACE"/>
</dbReference>
<dbReference type="InterPro" id="IPR009120">
    <property type="entry name" value="BACE1"/>
</dbReference>
<dbReference type="InterPro" id="IPR033874">
    <property type="entry name" value="Memapsin-like"/>
</dbReference>
<dbReference type="InterPro" id="IPR033121">
    <property type="entry name" value="PEPTIDASE_A1"/>
</dbReference>
<dbReference type="InterPro" id="IPR021109">
    <property type="entry name" value="Peptidase_aspartic_dom_sf"/>
</dbReference>
<dbReference type="PANTHER" id="PTHR47965">
    <property type="entry name" value="ASPARTYL PROTEASE-RELATED"/>
    <property type="match status" value="1"/>
</dbReference>
<dbReference type="PANTHER" id="PTHR47965:SF69">
    <property type="entry name" value="BETA-SECRETASE 1"/>
    <property type="match status" value="1"/>
</dbReference>
<dbReference type="Pfam" id="PF00026">
    <property type="entry name" value="Asp"/>
    <property type="match status" value="1"/>
</dbReference>
<dbReference type="PRINTS" id="PR01816">
    <property type="entry name" value="BACE1"/>
</dbReference>
<dbReference type="PRINTS" id="PR01815">
    <property type="entry name" value="BACEFAMILY"/>
</dbReference>
<dbReference type="PRINTS" id="PR00792">
    <property type="entry name" value="PEPSIN"/>
</dbReference>
<dbReference type="SUPFAM" id="SSF50630">
    <property type="entry name" value="Acid proteases"/>
    <property type="match status" value="1"/>
</dbReference>
<dbReference type="PROSITE" id="PS00141">
    <property type="entry name" value="ASP_PROTEASE"/>
    <property type="match status" value="1"/>
</dbReference>
<dbReference type="PROSITE" id="PS51767">
    <property type="entry name" value="PEPTIDASE_A1"/>
    <property type="match status" value="1"/>
</dbReference>
<accession>P56819</accession>
<evidence type="ECO:0000250" key="1"/>
<evidence type="ECO:0000250" key="2">
    <source>
        <dbReference type="UniProtKB" id="P56817"/>
    </source>
</evidence>
<evidence type="ECO:0000250" key="3">
    <source>
        <dbReference type="UniProtKB" id="P56818"/>
    </source>
</evidence>
<evidence type="ECO:0000255" key="4"/>
<evidence type="ECO:0000255" key="5">
    <source>
        <dbReference type="PROSITE-ProRule" id="PRU01103"/>
    </source>
</evidence>
<evidence type="ECO:0000255" key="6">
    <source>
        <dbReference type="PROSITE-ProRule" id="PRU10094"/>
    </source>
</evidence>
<evidence type="ECO:0000305" key="7"/>
<organism>
    <name type="scientific">Rattus norvegicus</name>
    <name type="common">Rat</name>
    <dbReference type="NCBI Taxonomy" id="10116"/>
    <lineage>
        <taxon>Eukaryota</taxon>
        <taxon>Metazoa</taxon>
        <taxon>Chordata</taxon>
        <taxon>Craniata</taxon>
        <taxon>Vertebrata</taxon>
        <taxon>Euteleostomi</taxon>
        <taxon>Mammalia</taxon>
        <taxon>Eutheria</taxon>
        <taxon>Euarchontoglires</taxon>
        <taxon>Glires</taxon>
        <taxon>Rodentia</taxon>
        <taxon>Myomorpha</taxon>
        <taxon>Muroidea</taxon>
        <taxon>Muridae</taxon>
        <taxon>Murinae</taxon>
        <taxon>Rattus</taxon>
    </lineage>
</organism>
<gene>
    <name type="primary">Bace1</name>
    <name type="synonym">Bace</name>
</gene>
<comment type="function">
    <text evidence="2 3">Responsible for the proteolytic processing of the amyloid precursor protein (APP). Cleaves at the N-terminus of the A-beta peptide sequence, between residues 671 and 672 of APP, leads to the generation and extracellular release of beta-cleaved soluble APP, and a corresponding cell-associated C-terminal fragment which is later released by gamma-secretase (By similarity). Cleaves CHL1 (By similarity).</text>
</comment>
<comment type="catalytic activity">
    <reaction evidence="2">
        <text>Broad endopeptidase specificity. Cleaves Glu-Val-Asn-Leu-|-Asp-Ala-Glu-Phe in the Swedish variant of Alzheimer's amyloid precursor protein.</text>
        <dbReference type="EC" id="3.4.23.46"/>
    </reaction>
</comment>
<comment type="activity regulation">
    <text evidence="2">Inhibited by RTN3 and RTN4.</text>
</comment>
<comment type="subunit">
    <text evidence="2 3">Monomer. Interacts (via DXXLL motif) with GGA1, GGA2 and GGA3 (via their VHS domain); the interaction highly increases when BACE1 is phosphorylated at Ser-498. Interacts with RTN1; RTN2; RTN3 and RTN4; the interaction leads to inhibition of amyloid precursor protein processing (By similarity). Interacts with SNX6. Interacts with PCSK9. Interacts with NAT8 and NAT8B. Interacts with BIN1 (By similarity). Interacts (via extracellular domain) with ADAM10 (via extracellular domain) (By similarity). Interacts with SORL1; this interaction may affect binding with APP and hence reduce APP cleavage (By similarity). Interacts with NRDC AND NRG1 (By similarity).</text>
</comment>
<comment type="subcellular location">
    <subcellularLocation>
        <location evidence="2">Cell membrane</location>
        <topology evidence="2">Single-pass type I membrane protein</topology>
    </subcellularLocation>
    <subcellularLocation>
        <location evidence="2">Golgi apparatus</location>
        <location evidence="2">trans-Golgi network</location>
    </subcellularLocation>
    <subcellularLocation>
        <location evidence="2">Endoplasmic reticulum</location>
    </subcellularLocation>
    <subcellularLocation>
        <location evidence="2">Endosome</location>
    </subcellularLocation>
    <subcellularLocation>
        <location evidence="2">Cell surface</location>
    </subcellularLocation>
    <subcellularLocation>
        <location evidence="2">Cytoplasmic vesicle membrane</location>
        <topology evidence="2">Single-pass type I membrane protein</topology>
    </subcellularLocation>
    <subcellularLocation>
        <location evidence="3">Membrane raft</location>
    </subcellularLocation>
    <subcellularLocation>
        <location evidence="2">Lysosome</location>
    </subcellularLocation>
    <subcellularLocation>
        <location evidence="2">Late endosome</location>
    </subcellularLocation>
    <subcellularLocation>
        <location evidence="2">Early endosome</location>
    </subcellularLocation>
    <subcellularLocation>
        <location evidence="2">Recycling endosome</location>
    </subcellularLocation>
    <subcellularLocation>
        <location evidence="3">Cell projection</location>
        <location evidence="3">Axon</location>
    </subcellularLocation>
    <subcellularLocation>
        <location evidence="3">Cell projection</location>
        <location evidence="3">Dendrite</location>
    </subcellularLocation>
    <text evidence="2 3">Predominantly localized to the later Golgi/trans-Golgi network (TGN) and minimally detectable in the early Golgi compartments. A small portion is also found in the endoplasmic reticulum, endosomes and on the cell surface (By similarity). Colocalization with APP in early endosomes is due to addition of bisecting N-acetylglucosamine which blocks targeting to late endosomes and lysosomes (By similarity). Retrogradly transported from endosomal compartments to the trans-Golgi network in a phosphorylation- and GGA1- dependent manner (By similarity).</text>
</comment>
<comment type="domain">
    <text evidence="2">DXXLL motif is required for a proper endocytosis and retrograde transport to the trans-Golgi network, as well as for regulation of lysosomal degradation.</text>
</comment>
<comment type="domain">
    <text evidence="2">The transmembrane domain is necessary for its activity. It determines its late Golgi localization and access to its substrate, APP.</text>
</comment>
<comment type="PTM">
    <text evidence="3">Palmitoylation mediates lipid raft localization.</text>
</comment>
<comment type="PTM">
    <text evidence="2">Acetylated in the endoplasmic reticulum at Lys-126, Lys-275, Lys-279, Lys-285, Lys-299, Lys-300 and Lys-307. Acetylation by NAT8 and NAT8B is transient and deacetylation probably occurs in the Golgi. Acetylation regulates the maturation, the transport to the plasma membrane, the stability and the expression of the protein.</text>
</comment>
<comment type="PTM">
    <text evidence="2">Ubiquitinated at Lys-501, ubiquitination leads to lysosomal degradation. Monoubiquitinated and 'Lys-63'-linked polyubitinated. Deubiquitnated by USP8; inhibits lysosomal degradation.</text>
</comment>
<comment type="PTM">
    <text evidence="2">Phosphorylation at Ser-498 is required for interaction with GGA1 and retrograded transport from endosomal compartments to the trans-Golgi network. Non-phosphorylated BACE1 enters a direct recycling route to the cell surface.</text>
</comment>
<comment type="PTM">
    <text evidence="2 3">N-Glycosylated (By similarity). Addition of a bisecting N-acetylglucosamine by MGAT3 blocks lysosomal targeting, further degradation and is required for maintaining stability under stress conditions (By similarity).</text>
</comment>
<comment type="similarity">
    <text evidence="7">Belongs to the peptidase A1 family.</text>
</comment>
<name>BACE1_RAT</name>
<sequence length="501" mass="55807">MAPALRWLLLWVGSGMLPAQGTHLGIRLPLRSGLAGPPLGLRLPRETDEEPEEPGRRGSFVEMVDNLRGKSGQGYYVEMTVGSPPQTLNILVDTGSSNFAVGAAPHPFLHRYYQRQLSSTYRDLRKSVYVPYTQGKWEGELGTDLVSIPHGPNVTVRANIAAITESDKFFINGSNWEGILGLAYAEIARPDDSLEPFFDSLVKQTHIPNIFSLQLCGAGFPLNQTEALASVGGSMIIGGIDHSLYTGSLWYTPIRREWYYEVIIVRVEINGQDLKMDCKEYNYDKSIVDSGTTNLRLPKKVFEAAVKSIKAASSTEKFPDGFWLGEQLVCWQAGTTPWNIFPVISLYLMGEVTNQSFRITILPQQYLRPVEDVATSQDDCYKFAVSQSSTGTVMGAVIMEGFYVVFDRARKRIGFAVSACHVHDEFRTAAVEGPFVTADMEDCGYNIPQTDESTLMTIAYVMAAICALFMLPLCLMVCQWRCLRCLRHQHDDFADDISLLK</sequence>
<protein>
    <recommendedName>
        <fullName>Beta-secretase 1</fullName>
        <ecNumber evidence="2">3.4.23.46</ecNumber>
    </recommendedName>
    <alternativeName>
        <fullName>Aspartyl protease 2</fullName>
        <shortName>ASP2</shortName>
        <shortName>Asp 2</shortName>
    </alternativeName>
    <alternativeName>
        <fullName>Beta-site amyloid precursor protein cleaving enzyme 1</fullName>
        <shortName>Beta-site APP cleaving enzyme 1</shortName>
    </alternativeName>
    <alternativeName>
        <fullName>Memapsin-2</fullName>
    </alternativeName>
    <alternativeName>
        <fullName>Membrane-associated aspartic protease 2</fullName>
    </alternativeName>
</protein>
<feature type="signal peptide" evidence="4">
    <location>
        <begin position="1"/>
        <end position="21"/>
    </location>
</feature>
<feature type="propeptide" id="PRO_0000025943" evidence="4">
    <location>
        <begin position="22"/>
        <end position="45"/>
    </location>
</feature>
<feature type="chain" id="PRO_0000025944" description="Beta-secretase 1">
    <location>
        <begin position="46"/>
        <end position="501"/>
    </location>
</feature>
<feature type="topological domain" description="Extracellular" evidence="4">
    <location>
        <begin position="22"/>
        <end position="457"/>
    </location>
</feature>
<feature type="transmembrane region" description="Helical" evidence="4">
    <location>
        <begin position="458"/>
        <end position="478"/>
    </location>
</feature>
<feature type="topological domain" description="Cytoplasmic" evidence="4">
    <location>
        <begin position="479"/>
        <end position="501"/>
    </location>
</feature>
<feature type="domain" description="Peptidase A1" evidence="5">
    <location>
        <begin position="75"/>
        <end position="416"/>
    </location>
</feature>
<feature type="region of interest" description="Interaction with RTN3" evidence="1">
    <location>
        <begin position="479"/>
        <end position="501"/>
    </location>
</feature>
<feature type="short sequence motif" description="DXXLL" evidence="2">
    <location>
        <begin position="496"/>
        <end position="500"/>
    </location>
</feature>
<feature type="active site" evidence="6">
    <location>
        <position position="93"/>
    </location>
</feature>
<feature type="active site" evidence="6">
    <location>
        <position position="289"/>
    </location>
</feature>
<feature type="modified residue" description="N6-acetyllysine" evidence="2">
    <location>
        <position position="126"/>
    </location>
</feature>
<feature type="modified residue" description="N6-acetyllysine" evidence="2">
    <location>
        <position position="275"/>
    </location>
</feature>
<feature type="modified residue" description="N6-acetyllysine" evidence="2">
    <location>
        <position position="279"/>
    </location>
</feature>
<feature type="modified residue" description="N6-acetyllysine" evidence="2">
    <location>
        <position position="285"/>
    </location>
</feature>
<feature type="modified residue" description="N6-acetyllysine" evidence="2">
    <location>
        <position position="299"/>
    </location>
</feature>
<feature type="modified residue" description="N6-acetyllysine" evidence="2">
    <location>
        <position position="300"/>
    </location>
</feature>
<feature type="modified residue" description="N6-acetyllysine" evidence="2">
    <location>
        <position position="307"/>
    </location>
</feature>
<feature type="modified residue" description="Phosphoserine" evidence="3">
    <location>
        <position position="498"/>
    </location>
</feature>
<feature type="lipid moiety-binding region" description="S-palmitoyl cysteine" evidence="3">
    <location>
        <position position="474"/>
    </location>
</feature>
<feature type="lipid moiety-binding region" description="S-palmitoyl cysteine" evidence="3">
    <location>
        <position position="478"/>
    </location>
</feature>
<feature type="lipid moiety-binding region" description="S-palmitoyl cysteine" evidence="3">
    <location>
        <position position="482"/>
    </location>
</feature>
<feature type="lipid moiety-binding region" description="S-palmitoyl cysteine" evidence="3">
    <location>
        <position position="485"/>
    </location>
</feature>
<feature type="glycosylation site" description="N-linked (GlcNAc...) asparagine" evidence="4">
    <location>
        <position position="153"/>
    </location>
</feature>
<feature type="glycosylation site" description="N-linked (GlcNAc...) asparagine" evidence="4">
    <location>
        <position position="172"/>
    </location>
</feature>
<feature type="glycosylation site" description="N-linked (GlcNAc...) asparagine" evidence="4">
    <location>
        <position position="223"/>
    </location>
</feature>
<feature type="glycosylation site" description="N-linked (GlcNAc...) asparagine" evidence="4">
    <location>
        <position position="354"/>
    </location>
</feature>
<feature type="disulfide bond" evidence="1">
    <location>
        <begin position="216"/>
        <end position="420"/>
    </location>
</feature>
<feature type="disulfide bond" evidence="1">
    <location>
        <begin position="278"/>
        <end position="443"/>
    </location>
</feature>
<feature type="disulfide bond" evidence="1">
    <location>
        <begin position="330"/>
        <end position="380"/>
    </location>
</feature>
<feature type="cross-link" description="Glycyl lysine isopeptide (Lys-Gly) (interchain with G-Cter in ubiquitin)" evidence="2">
    <location>
        <position position="501"/>
    </location>
</feature>